<keyword id="KW-0007">Acetylation</keyword>
<keyword id="KW-0010">Activator</keyword>
<keyword id="KW-0158">Chromosome</keyword>
<keyword id="KW-0963">Cytoplasm</keyword>
<keyword id="KW-1017">Isopeptide bond</keyword>
<keyword id="KW-0539">Nucleus</keyword>
<keyword id="KW-0597">Phosphoprotein</keyword>
<keyword id="KW-1185">Reference proteome</keyword>
<keyword id="KW-0779">Telomere</keyword>
<keyword id="KW-0804">Transcription</keyword>
<keyword id="KW-0805">Transcription regulation</keyword>
<keyword id="KW-0832">Ubl conjugation</keyword>
<dbReference type="EMBL" id="BC090335">
    <property type="protein sequence ID" value="AAH90335.1"/>
    <property type="molecule type" value="mRNA"/>
</dbReference>
<dbReference type="RefSeq" id="NP_001013161.1">
    <property type="nucleotide sequence ID" value="NM_001013143.1"/>
</dbReference>
<dbReference type="SMR" id="Q5EAN7"/>
<dbReference type="FunCoup" id="Q5EAN7">
    <property type="interactions" value="2984"/>
</dbReference>
<dbReference type="STRING" id="10116.ENSRNOP00000014660"/>
<dbReference type="GlyGen" id="Q5EAN7">
    <property type="glycosylation" value="1 site"/>
</dbReference>
<dbReference type="iPTMnet" id="Q5EAN7"/>
<dbReference type="PhosphoSitePlus" id="Q5EAN7"/>
<dbReference type="jPOST" id="Q5EAN7"/>
<dbReference type="PaxDb" id="10116-ENSRNOP00000014660"/>
<dbReference type="Ensembl" id="ENSRNOT00000114583.1">
    <property type="protein sequence ID" value="ENSRNOP00000085839.1"/>
    <property type="gene ID" value="ENSRNOG00000010712.8"/>
</dbReference>
<dbReference type="GeneID" id="307861"/>
<dbReference type="KEGG" id="rno:307861"/>
<dbReference type="UCSC" id="RGD:1309684">
    <property type="organism name" value="rat"/>
</dbReference>
<dbReference type="AGR" id="RGD:1309684"/>
<dbReference type="CTD" id="54386"/>
<dbReference type="RGD" id="1309684">
    <property type="gene designation" value="Terf2ip"/>
</dbReference>
<dbReference type="eggNOG" id="ENOG502RPXS">
    <property type="taxonomic scope" value="Eukaryota"/>
</dbReference>
<dbReference type="GeneTree" id="ENSGT00390000005351"/>
<dbReference type="HOGENOM" id="CLU_028192_0_0_1"/>
<dbReference type="InParanoid" id="Q5EAN7"/>
<dbReference type="OMA" id="SDGYPIW"/>
<dbReference type="OrthoDB" id="53856at9989"/>
<dbReference type="PhylomeDB" id="Q5EAN7"/>
<dbReference type="TreeFam" id="TF332348"/>
<dbReference type="Reactome" id="R-RNO-110330">
    <property type="pathway name" value="Recognition and association of DNA glycosylase with site containing an affected purine"/>
</dbReference>
<dbReference type="Reactome" id="R-RNO-110331">
    <property type="pathway name" value="Cleavage of the damaged purine"/>
</dbReference>
<dbReference type="Reactome" id="R-RNO-171319">
    <property type="pathway name" value="Telomere Extension By Telomerase"/>
</dbReference>
<dbReference type="Reactome" id="R-RNO-174411">
    <property type="pathway name" value="Polymerase switching on the C-strand of the telomere"/>
</dbReference>
<dbReference type="Reactome" id="R-RNO-174414">
    <property type="pathway name" value="Processive synthesis on the C-strand of the telomere"/>
</dbReference>
<dbReference type="Reactome" id="R-RNO-174417">
    <property type="pathway name" value="Telomere C-strand (Lagging Strand) Synthesis"/>
</dbReference>
<dbReference type="Reactome" id="R-RNO-174430">
    <property type="pathway name" value="Telomere C-strand synthesis initiation"/>
</dbReference>
<dbReference type="Reactome" id="R-RNO-174437">
    <property type="pathway name" value="Removal of the Flap Intermediate from the C-strand"/>
</dbReference>
<dbReference type="Reactome" id="R-RNO-2559586">
    <property type="pathway name" value="DNA Damage/Telomere Stress Induced Senescence"/>
</dbReference>
<dbReference type="PRO" id="PR:Q5EAN7"/>
<dbReference type="Proteomes" id="UP000002494">
    <property type="component" value="Chromosome 19"/>
</dbReference>
<dbReference type="Bgee" id="ENSRNOG00000010712">
    <property type="expression patterns" value="Expressed in lung and 20 other cell types or tissues"/>
</dbReference>
<dbReference type="GO" id="GO:0000781">
    <property type="term" value="C:chromosome, telomeric region"/>
    <property type="evidence" value="ECO:0000250"/>
    <property type="project" value="UniProtKB"/>
</dbReference>
<dbReference type="GO" id="GO:0005737">
    <property type="term" value="C:cytoplasm"/>
    <property type="evidence" value="ECO:0000250"/>
    <property type="project" value="UniProtKB"/>
</dbReference>
<dbReference type="GO" id="GO:0001673">
    <property type="term" value="C:male germ cell nucleus"/>
    <property type="evidence" value="ECO:0000266"/>
    <property type="project" value="RGD"/>
</dbReference>
<dbReference type="GO" id="GO:0005634">
    <property type="term" value="C:nucleus"/>
    <property type="evidence" value="ECO:0000250"/>
    <property type="project" value="UniProtKB"/>
</dbReference>
<dbReference type="GO" id="GO:0070187">
    <property type="term" value="C:shelterin complex"/>
    <property type="evidence" value="ECO:0000318"/>
    <property type="project" value="GO_Central"/>
</dbReference>
<dbReference type="GO" id="GO:0042162">
    <property type="term" value="F:telomeric DNA binding"/>
    <property type="evidence" value="ECO:0000266"/>
    <property type="project" value="RGD"/>
</dbReference>
<dbReference type="GO" id="GO:0048239">
    <property type="term" value="P:negative regulation of DNA recombination at telomere"/>
    <property type="evidence" value="ECO:0000250"/>
    <property type="project" value="UniProtKB"/>
</dbReference>
<dbReference type="GO" id="GO:0043123">
    <property type="term" value="P:positive regulation of canonical NF-kappaB signal transduction"/>
    <property type="evidence" value="ECO:0000250"/>
    <property type="project" value="UniProtKB"/>
</dbReference>
<dbReference type="GO" id="GO:0051092">
    <property type="term" value="P:positive regulation of NF-kappaB transcription factor activity"/>
    <property type="evidence" value="ECO:0000250"/>
    <property type="project" value="UniProtKB"/>
</dbReference>
<dbReference type="GO" id="GO:0031848">
    <property type="term" value="P:protection from non-homologous end joining at telomere"/>
    <property type="evidence" value="ECO:0000318"/>
    <property type="project" value="GO_Central"/>
</dbReference>
<dbReference type="GO" id="GO:0006355">
    <property type="term" value="P:regulation of DNA-templated transcription"/>
    <property type="evidence" value="ECO:0000250"/>
    <property type="project" value="UniProtKB"/>
</dbReference>
<dbReference type="GO" id="GO:0010569">
    <property type="term" value="P:regulation of double-strand break repair via homologous recombination"/>
    <property type="evidence" value="ECO:0000250"/>
    <property type="project" value="UniProtKB"/>
</dbReference>
<dbReference type="GO" id="GO:0010833">
    <property type="term" value="P:telomere maintenance via telomere lengthening"/>
    <property type="evidence" value="ECO:0000250"/>
    <property type="project" value="UniProtKB"/>
</dbReference>
<dbReference type="CDD" id="cd11655">
    <property type="entry name" value="rap1_myb-like"/>
    <property type="match status" value="1"/>
</dbReference>
<dbReference type="CDD" id="cd11653">
    <property type="entry name" value="rap1_RCT"/>
    <property type="match status" value="1"/>
</dbReference>
<dbReference type="FunFam" id="1.10.10.2170:FF:000001">
    <property type="entry name" value="Telomeric repeat-binding factor 2-interacting protein 1"/>
    <property type="match status" value="1"/>
</dbReference>
<dbReference type="FunFam" id="1.10.10.60:FF:000246">
    <property type="entry name" value="Telomeric repeat-binding factor 2-interacting protein 1"/>
    <property type="match status" value="1"/>
</dbReference>
<dbReference type="Gene3D" id="1.10.10.2170">
    <property type="match status" value="1"/>
</dbReference>
<dbReference type="Gene3D" id="1.10.10.60">
    <property type="entry name" value="Homeodomain-like"/>
    <property type="match status" value="1"/>
</dbReference>
<dbReference type="InterPro" id="IPR001357">
    <property type="entry name" value="BRCT_dom"/>
</dbReference>
<dbReference type="InterPro" id="IPR009057">
    <property type="entry name" value="Homeodomain-like_sf"/>
</dbReference>
<dbReference type="InterPro" id="IPR021661">
    <property type="entry name" value="Rap1_C"/>
</dbReference>
<dbReference type="InterPro" id="IPR038104">
    <property type="entry name" value="Rap1_C_sf"/>
</dbReference>
<dbReference type="InterPro" id="IPR039595">
    <property type="entry name" value="TE2IP/Rap1"/>
</dbReference>
<dbReference type="InterPro" id="IPR015010">
    <property type="entry name" value="TERF2IP_Myb"/>
</dbReference>
<dbReference type="PANTHER" id="PTHR16466">
    <property type="entry name" value="TELOMERE REPEAT-BINDING FACTOR 2-INTERACTING PROTEIN 1"/>
    <property type="match status" value="1"/>
</dbReference>
<dbReference type="PANTHER" id="PTHR16466:SF6">
    <property type="entry name" value="TELOMERIC REPEAT-BINDING FACTOR 2-INTERACTING PROTEIN 1"/>
    <property type="match status" value="1"/>
</dbReference>
<dbReference type="Pfam" id="PF16589">
    <property type="entry name" value="BRCT_2"/>
    <property type="match status" value="1"/>
</dbReference>
<dbReference type="Pfam" id="PF08914">
    <property type="entry name" value="Myb_Rap1"/>
    <property type="match status" value="1"/>
</dbReference>
<dbReference type="Pfam" id="PF11626">
    <property type="entry name" value="Rap1_C"/>
    <property type="match status" value="1"/>
</dbReference>
<dbReference type="SUPFAM" id="SSF46689">
    <property type="entry name" value="Homeodomain-like"/>
    <property type="match status" value="1"/>
</dbReference>
<accession>Q5EAN7</accession>
<feature type="initiator methionine" description="Removed" evidence="3">
    <location>
        <position position="1"/>
    </location>
</feature>
<feature type="chain" id="PRO_0000398641" description="Telomeric repeat-binding factor 2-interacting protein 1">
    <location>
        <begin position="2"/>
        <end position="393"/>
    </location>
</feature>
<feature type="domain" description="BRCT">
    <location>
        <begin position="10"/>
        <end position="101"/>
    </location>
</feature>
<feature type="domain" description="Myb-like">
    <location>
        <begin position="125"/>
        <end position="185"/>
    </location>
</feature>
<feature type="region of interest" description="Disordered" evidence="5">
    <location>
        <begin position="104"/>
        <end position="132"/>
    </location>
</feature>
<feature type="region of interest" description="Disordered" evidence="5">
    <location>
        <begin position="194"/>
        <end position="248"/>
    </location>
</feature>
<feature type="region of interest" description="Disordered" evidence="5">
    <location>
        <begin position="272"/>
        <end position="305"/>
    </location>
</feature>
<feature type="short sequence motif" description="Nuclear localization signal" evidence="4">
    <location>
        <begin position="377"/>
        <end position="393"/>
    </location>
</feature>
<feature type="compositionally biased region" description="Basic and acidic residues" evidence="5">
    <location>
        <begin position="223"/>
        <end position="248"/>
    </location>
</feature>
<feature type="compositionally biased region" description="Acidic residues" evidence="5">
    <location>
        <begin position="282"/>
        <end position="297"/>
    </location>
</feature>
<feature type="modified residue" description="N-acetylalanine" evidence="3">
    <location>
        <position position="2"/>
    </location>
</feature>
<feature type="modified residue" description="Phosphoserine" evidence="3">
    <location>
        <position position="36"/>
    </location>
</feature>
<feature type="modified residue" description="Phosphoserine" evidence="3">
    <location>
        <position position="43"/>
    </location>
</feature>
<feature type="modified residue" description="Phosphoserine" evidence="3">
    <location>
        <position position="151"/>
    </location>
</feature>
<feature type="modified residue" description="Phosphoserine" evidence="3">
    <location>
        <position position="153"/>
    </location>
</feature>
<feature type="modified residue" description="Phosphoserine" evidence="7">
    <location>
        <position position="200"/>
    </location>
</feature>
<feature type="modified residue" description="Phosphoserine" evidence="3">
    <location>
        <position position="203"/>
    </location>
</feature>
<feature type="cross-link" description="Glycyl lysine isopeptide (Lys-Gly) (interchain with G-Cter in SUMO2)" evidence="3">
    <location>
        <position position="111"/>
    </location>
</feature>
<feature type="cross-link" description="Glycyl lysine isopeptide (Lys-Gly) (interchain with G-Cter in SUMO2)" evidence="3">
    <location>
        <position position="191"/>
    </location>
</feature>
<feature type="cross-link" description="Glycyl lysine isopeptide (Lys-Gly) (interchain with G-Cter in SUMO2)" evidence="3">
    <location>
        <position position="205"/>
    </location>
</feature>
<feature type="cross-link" description="Glycyl lysine isopeptide (Lys-Gly) (interchain with G-Cter in SUMO2)" evidence="3">
    <location>
        <position position="209"/>
    </location>
</feature>
<feature type="cross-link" description="Glycyl lysine isopeptide (Lys-Gly) (interchain with G-Cter in SUMO2)" evidence="3">
    <location>
        <position position="237"/>
    </location>
</feature>
<feature type="cross-link" description="Glycyl lysine isopeptide (Lys-Gly) (interchain with G-Cter in SUMO2)" evidence="3">
    <location>
        <position position="366"/>
    </location>
</feature>
<evidence type="ECO:0000250" key="1"/>
<evidence type="ECO:0000250" key="2">
    <source>
        <dbReference type="UniProtKB" id="Q91VL8"/>
    </source>
</evidence>
<evidence type="ECO:0000250" key="3">
    <source>
        <dbReference type="UniProtKB" id="Q9NYB0"/>
    </source>
</evidence>
<evidence type="ECO:0000255" key="4"/>
<evidence type="ECO:0000256" key="5">
    <source>
        <dbReference type="SAM" id="MobiDB-lite"/>
    </source>
</evidence>
<evidence type="ECO:0000305" key="6"/>
<evidence type="ECO:0007744" key="7">
    <source>
    </source>
</evidence>
<sequence>MAEVMDLGKDPNGPTHSSTLFVREDGSAMSFYVRPSSAKRRLSTLILHGGGILCRVQKPGAVLLAQPGEALAEASGDFISTQYILDCVERNEKLELEAYRLGLTEQASDPKPGASAEGSTEPEPQPLTGRIAYTDADDVAILTYVKENARSPSSVTGNALWKAMEKSSLTQHSWQSLKDRYLKHLQGQEHKYLLGNAPVSPSSQKLKRKAEQDPEAADSGEPQNKRTPDLPEEECVKGETKENGEADNKLFEEATPELGEAVVDESPDFEIHITMCDGDPPTPEEDSETQPDEEEEEPKVSTQEVGTAIKIIRQLMEKFNLDLSTVTQALLKNSGELEATSSFLESGRRPDGFPIWCRQDDLDLQKDDDDTRNALVKKYGAQNVARRIEFRKK</sequence>
<organism>
    <name type="scientific">Rattus norvegicus</name>
    <name type="common">Rat</name>
    <dbReference type="NCBI Taxonomy" id="10116"/>
    <lineage>
        <taxon>Eukaryota</taxon>
        <taxon>Metazoa</taxon>
        <taxon>Chordata</taxon>
        <taxon>Craniata</taxon>
        <taxon>Vertebrata</taxon>
        <taxon>Euteleostomi</taxon>
        <taxon>Mammalia</taxon>
        <taxon>Eutheria</taxon>
        <taxon>Euarchontoglires</taxon>
        <taxon>Glires</taxon>
        <taxon>Rodentia</taxon>
        <taxon>Myomorpha</taxon>
        <taxon>Muroidea</taxon>
        <taxon>Muridae</taxon>
        <taxon>Murinae</taxon>
        <taxon>Rattus</taxon>
    </lineage>
</organism>
<name>TE2IP_RAT</name>
<comment type="function">
    <text evidence="1">Acts both as a regulator of telomere function and as a transcription regulator. Involved in the regulation of telomere length and protection as a component of the shelterin complex (telosome). In contrast to other components of the shelterin complex, it is dispensible for telomere capping and does not participate in the protection of telomeres against non-homologous end-joining (NHEJ)-mediated repair. Instead, it is required to negatively regulate telomere recombination and is essential for repressing homology-directed repair (HDR), which can affect telomere length. Does not bind DNA directly: recruited to telomeric double-stranded 5'-TTAGGG-3' repeats via its interaction with TERF2. Independently of its function in telomeres, also acts as a transcription regulator: recruited to extratelomeric 5'-TTAGGG-3' sites via its association with TERF2 or other factors, and regulates gene expression. When cytoplasmic, associates with the I-kappa-B-kinase (IKK) complex and acts as a regulator of the NF-kappa-B signaling by promoting IKK-mediated phosphorylation of RELA/p65, leading to activate expression of NF-kappa-B target genes (By similarity).</text>
</comment>
<comment type="subunit">
    <text evidence="1">Associates with the I-kappa-B-kinase (IKK) core complex, composed of CHUK, IKBKB and IKBKG (By similarity). Homodimer. Component of the shelterin complex (telosome) composed of TERF1, TERF2, TINF2, TERF2IP ACD and POT1. Interacts with TERF2 (but not TERF1) with its C-terminus. Interacts with SLX4/BTBD12. Interacts with TERF2; the interaction is direct (By similarity).</text>
</comment>
<comment type="subcellular location">
    <subcellularLocation>
        <location evidence="2">Nucleus</location>
    </subcellularLocation>
    <subcellularLocation>
        <location evidence="2">Cytoplasm</location>
    </subcellularLocation>
    <subcellularLocation>
        <location evidence="2">Chromosome</location>
    </subcellularLocation>
    <subcellularLocation>
        <location evidence="2">Chromosome</location>
        <location evidence="2">Telomere</location>
    </subcellularLocation>
    <text evidence="2">Associates with chromosomes, both at telomeres and in extratelomeric sites. Also exists as a cytoplasmic form, where it associates with the IKK complex.</text>
</comment>
<comment type="similarity">
    <text evidence="6">Belongs to the RAP1 family.</text>
</comment>
<proteinExistence type="evidence at protein level"/>
<reference key="1">
    <citation type="journal article" date="2004" name="Genome Res.">
        <title>The status, quality, and expansion of the NIH full-length cDNA project: the Mammalian Gene Collection (MGC).</title>
        <authorList>
            <consortium name="The MGC Project Team"/>
        </authorList>
    </citation>
    <scope>NUCLEOTIDE SEQUENCE [LARGE SCALE MRNA]</scope>
    <source>
        <tissue>Ovary</tissue>
    </source>
</reference>
<reference key="2">
    <citation type="journal article" date="2012" name="Nat. Commun.">
        <title>Quantitative maps of protein phosphorylation sites across 14 different rat organs and tissues.</title>
        <authorList>
            <person name="Lundby A."/>
            <person name="Secher A."/>
            <person name="Lage K."/>
            <person name="Nordsborg N.B."/>
            <person name="Dmytriyev A."/>
            <person name="Lundby C."/>
            <person name="Olsen J.V."/>
        </authorList>
    </citation>
    <scope>PHOSPHORYLATION [LARGE SCALE ANALYSIS] AT SER-200</scope>
    <scope>IDENTIFICATION BY MASS SPECTROMETRY [LARGE SCALE ANALYSIS]</scope>
</reference>
<gene>
    <name type="primary">Terf2ip</name>
    <name type="synonym">Rap1</name>
</gene>
<protein>
    <recommendedName>
        <fullName>Telomeric repeat-binding factor 2-interacting protein 1</fullName>
        <shortName>TERF2-interacting telomeric protein 1</shortName>
        <shortName>TRF2-interacting telomeric protein 1</shortName>
    </recommendedName>
    <alternativeName>
        <fullName>Repressor/activator protein 1 homolog</fullName>
        <shortName>RAP1 homolog</shortName>
    </alternativeName>
</protein>